<dbReference type="EMBL" id="AB010692">
    <property type="protein sequence ID" value="BAB09980.1"/>
    <property type="molecule type" value="Genomic_DNA"/>
</dbReference>
<dbReference type="EMBL" id="CP002688">
    <property type="protein sequence ID" value="AED90866.1"/>
    <property type="molecule type" value="Genomic_DNA"/>
</dbReference>
<dbReference type="EMBL" id="BT010476">
    <property type="protein sequence ID" value="AAQ65099.1"/>
    <property type="molecule type" value="mRNA"/>
</dbReference>
<dbReference type="RefSeq" id="NP_196156.1">
    <property type="nucleotide sequence ID" value="NM_120619.4"/>
</dbReference>
<dbReference type="SMR" id="Q9FLB7"/>
<dbReference type="FunCoup" id="Q9FLB7">
    <property type="interactions" value="472"/>
</dbReference>
<dbReference type="STRING" id="3702.Q9FLB7"/>
<dbReference type="PaxDb" id="3702-AT5G05370.1"/>
<dbReference type="ProteomicsDB" id="187154"/>
<dbReference type="DNASU" id="830419"/>
<dbReference type="EnsemblPlants" id="AT5G05370.1">
    <property type="protein sequence ID" value="AT5G05370.1"/>
    <property type="gene ID" value="AT5G05370"/>
</dbReference>
<dbReference type="GeneID" id="830419"/>
<dbReference type="Gramene" id="AT5G05370.1">
    <property type="protein sequence ID" value="AT5G05370.1"/>
    <property type="gene ID" value="AT5G05370"/>
</dbReference>
<dbReference type="KEGG" id="ath:AT5G05370"/>
<dbReference type="Araport" id="AT5G05370"/>
<dbReference type="TAIR" id="AT5G05370"/>
<dbReference type="eggNOG" id="ENOG502S4G5">
    <property type="taxonomic scope" value="Eukaryota"/>
</dbReference>
<dbReference type="HOGENOM" id="CLU_202122_0_0_1"/>
<dbReference type="InParanoid" id="Q9FLB7"/>
<dbReference type="OMA" id="WYQEKEK"/>
<dbReference type="OrthoDB" id="1841852at2759"/>
<dbReference type="PhylomeDB" id="Q9FLB7"/>
<dbReference type="PRO" id="PR:Q9FLB7"/>
<dbReference type="Proteomes" id="UP000006548">
    <property type="component" value="Chromosome 5"/>
</dbReference>
<dbReference type="ExpressionAtlas" id="Q9FLB7">
    <property type="expression patterns" value="baseline and differential"/>
</dbReference>
<dbReference type="GO" id="GO:0005743">
    <property type="term" value="C:mitochondrial inner membrane"/>
    <property type="evidence" value="ECO:0007669"/>
    <property type="project" value="UniProtKB-SubCell"/>
</dbReference>
<dbReference type="GO" id="GO:0005886">
    <property type="term" value="C:plasma membrane"/>
    <property type="evidence" value="ECO:0007005"/>
    <property type="project" value="TAIR"/>
</dbReference>
<dbReference type="GO" id="GO:0045275">
    <property type="term" value="C:respiratory chain complex III"/>
    <property type="evidence" value="ECO:0007669"/>
    <property type="project" value="InterPro"/>
</dbReference>
<dbReference type="GO" id="GO:0006122">
    <property type="term" value="P:mitochondrial electron transport, ubiquinol to cytochrome c"/>
    <property type="evidence" value="ECO:0007669"/>
    <property type="project" value="InterPro"/>
</dbReference>
<dbReference type="Gene3D" id="1.20.5.210">
    <property type="entry name" value="Cytochrome b-c1 complex subunit 8"/>
    <property type="match status" value="1"/>
</dbReference>
<dbReference type="InterPro" id="IPR020101">
    <property type="entry name" value="Cyt_b-c1_8-plants"/>
</dbReference>
<dbReference type="InterPro" id="IPR036642">
    <property type="entry name" value="Cyt_bc1_su8_sf"/>
</dbReference>
<dbReference type="PANTHER" id="PTHR34559">
    <property type="entry name" value="CYTOCHROME B-C1 COMPLEX SUBUNIT 8"/>
    <property type="match status" value="1"/>
</dbReference>
<dbReference type="PANTHER" id="PTHR34559:SF2">
    <property type="entry name" value="CYTOCHROME B-C1 COMPLEX SUBUNIT 8-2, MITOCHONDRIAL"/>
    <property type="match status" value="1"/>
</dbReference>
<dbReference type="Pfam" id="PF10890">
    <property type="entry name" value="Cyt_b-c1_8"/>
    <property type="match status" value="1"/>
</dbReference>
<dbReference type="SUPFAM" id="SSF81508">
    <property type="entry name" value="Ubiquinone-binding protein QP-C of cytochrome bc1 complex (Ubiquinol-cytochrome c reductase)"/>
    <property type="match status" value="1"/>
</dbReference>
<accession>Q9FLB7</accession>
<name>UCRQ2_ARATH</name>
<reference key="1">
    <citation type="journal article" date="1998" name="DNA Res.">
        <title>Structural analysis of Arabidopsis thaliana chromosome 5. V. Sequence features of the regions of 1,381,565 bp covered by twenty one physically assigned P1 and TAC clones.</title>
        <authorList>
            <person name="Kaneko T."/>
            <person name="Kotani H."/>
            <person name="Nakamura Y."/>
            <person name="Sato S."/>
            <person name="Asamizu E."/>
            <person name="Miyajima N."/>
            <person name="Tabata S."/>
        </authorList>
    </citation>
    <scope>NUCLEOTIDE SEQUENCE [LARGE SCALE GENOMIC DNA]</scope>
    <source>
        <strain>cv. Columbia</strain>
    </source>
</reference>
<reference key="2">
    <citation type="journal article" date="2017" name="Plant J.">
        <title>Araport11: a complete reannotation of the Arabidopsis thaliana reference genome.</title>
        <authorList>
            <person name="Cheng C.Y."/>
            <person name="Krishnakumar V."/>
            <person name="Chan A.P."/>
            <person name="Thibaud-Nissen F."/>
            <person name="Schobel S."/>
            <person name="Town C.D."/>
        </authorList>
    </citation>
    <scope>GENOME REANNOTATION</scope>
    <source>
        <strain>cv. Columbia</strain>
    </source>
</reference>
<reference key="3">
    <citation type="journal article" date="2003" name="Science">
        <title>Empirical analysis of transcriptional activity in the Arabidopsis genome.</title>
        <authorList>
            <person name="Yamada K."/>
            <person name="Lim J."/>
            <person name="Dale J.M."/>
            <person name="Chen H."/>
            <person name="Shinn P."/>
            <person name="Palm C.J."/>
            <person name="Southwick A.M."/>
            <person name="Wu H.C."/>
            <person name="Kim C.J."/>
            <person name="Nguyen M."/>
            <person name="Pham P.K."/>
            <person name="Cheuk R.F."/>
            <person name="Karlin-Newmann G."/>
            <person name="Liu S.X."/>
            <person name="Lam B."/>
            <person name="Sakano H."/>
            <person name="Wu T."/>
            <person name="Yu G."/>
            <person name="Miranda M."/>
            <person name="Quach H.L."/>
            <person name="Tripp M."/>
            <person name="Chang C.H."/>
            <person name="Lee J.M."/>
            <person name="Toriumi M.J."/>
            <person name="Chan M.M."/>
            <person name="Tang C.C."/>
            <person name="Onodera C.S."/>
            <person name="Deng J.M."/>
            <person name="Akiyama K."/>
            <person name="Ansari Y."/>
            <person name="Arakawa T."/>
            <person name="Banh J."/>
            <person name="Banno F."/>
            <person name="Bowser L."/>
            <person name="Brooks S.Y."/>
            <person name="Carninci P."/>
            <person name="Chao Q."/>
            <person name="Choy N."/>
            <person name="Enju A."/>
            <person name="Goldsmith A.D."/>
            <person name="Gurjal M."/>
            <person name="Hansen N.F."/>
            <person name="Hayashizaki Y."/>
            <person name="Johnson-Hopson C."/>
            <person name="Hsuan V.W."/>
            <person name="Iida K."/>
            <person name="Karnes M."/>
            <person name="Khan S."/>
            <person name="Koesema E."/>
            <person name="Ishida J."/>
            <person name="Jiang P.X."/>
            <person name="Jones T."/>
            <person name="Kawai J."/>
            <person name="Kamiya A."/>
            <person name="Meyers C."/>
            <person name="Nakajima M."/>
            <person name="Narusaka M."/>
            <person name="Seki M."/>
            <person name="Sakurai T."/>
            <person name="Satou M."/>
            <person name="Tamse R."/>
            <person name="Vaysberg M."/>
            <person name="Wallender E.K."/>
            <person name="Wong C."/>
            <person name="Yamamura Y."/>
            <person name="Yuan S."/>
            <person name="Shinozaki K."/>
            <person name="Davis R.W."/>
            <person name="Theologis A."/>
            <person name="Ecker J.R."/>
        </authorList>
    </citation>
    <scope>NUCLEOTIDE SEQUENCE [LARGE SCALE MRNA]</scope>
    <source>
        <strain>cv. Columbia</strain>
    </source>
</reference>
<reference key="4">
    <citation type="journal article" date="2003" name="Plant Physiol.">
        <title>New insights into the respiratory chain of plant mitochondria. Supercomplexes and a unique composition of complex II.</title>
        <authorList>
            <person name="Eubel H."/>
            <person name="Jansch L."/>
            <person name="Braun H.P."/>
        </authorList>
    </citation>
    <scope>SUBUNIT</scope>
</reference>
<reference key="5">
    <citation type="journal article" date="2008" name="J. Proteome Res.">
        <title>Resolving and identifying protein components of plant mitochondrial respiratory complexes using three dimensions of gel electrophoresis.</title>
        <authorList>
            <person name="Meyer E.H."/>
            <person name="Taylor N.L."/>
            <person name="Millar A.H."/>
        </authorList>
    </citation>
    <scope>SUBCELLULAR LOCATION</scope>
    <scope>SUBUNIT</scope>
    <scope>IDENTIFICATION BY MASS SPECTROMETRY</scope>
</reference>
<evidence type="ECO:0000250" key="1">
    <source>
        <dbReference type="UniProtKB" id="P08525"/>
    </source>
</evidence>
<evidence type="ECO:0000255" key="2"/>
<evidence type="ECO:0000269" key="3">
    <source>
    </source>
</evidence>
<evidence type="ECO:0000269" key="4">
    <source>
    </source>
</evidence>
<evidence type="ECO:0000305" key="5"/>
<evidence type="ECO:0000312" key="6">
    <source>
        <dbReference type="Araport" id="AT5G05370"/>
    </source>
</evidence>
<evidence type="ECO:0000312" key="7">
    <source>
        <dbReference type="EMBL" id="BAB09980.1"/>
    </source>
</evidence>
<keyword id="KW-0249">Electron transport</keyword>
<keyword id="KW-0472">Membrane</keyword>
<keyword id="KW-0496">Mitochondrion</keyword>
<keyword id="KW-0999">Mitochondrion inner membrane</keyword>
<keyword id="KW-1185">Reference proteome</keyword>
<keyword id="KW-0679">Respiratory chain</keyword>
<keyword id="KW-0812">Transmembrane</keyword>
<keyword id="KW-1133">Transmembrane helix</keyword>
<keyword id="KW-0813">Transport</keyword>
<keyword id="KW-0830">Ubiquinone</keyword>
<gene>
    <name type="primary">UCRQ-2</name>
    <name evidence="6" type="ordered locus">At5g05370</name>
    <name evidence="7" type="ORF">K18I23.18</name>
</gene>
<organism>
    <name type="scientific">Arabidopsis thaliana</name>
    <name type="common">Mouse-ear cress</name>
    <dbReference type="NCBI Taxonomy" id="3702"/>
    <lineage>
        <taxon>Eukaryota</taxon>
        <taxon>Viridiplantae</taxon>
        <taxon>Streptophyta</taxon>
        <taxon>Embryophyta</taxon>
        <taxon>Tracheophyta</taxon>
        <taxon>Spermatophyta</taxon>
        <taxon>Magnoliopsida</taxon>
        <taxon>eudicotyledons</taxon>
        <taxon>Gunneridae</taxon>
        <taxon>Pentapetalae</taxon>
        <taxon>rosids</taxon>
        <taxon>malvids</taxon>
        <taxon>Brassicales</taxon>
        <taxon>Brassicaceae</taxon>
        <taxon>Camelineae</taxon>
        <taxon>Arabidopsis</taxon>
    </lineage>
</organism>
<proteinExistence type="evidence at protein level"/>
<feature type="chain" id="PRO_0000449255" description="Cytochrome b-c1 complex subunit 8-2, mitochondrial">
    <location>
        <begin position="1"/>
        <end position="72"/>
    </location>
</feature>
<feature type="topological domain" description="Mitochondrial matrix" evidence="1">
    <location>
        <begin position="1"/>
        <end position="41"/>
    </location>
</feature>
<feature type="transmembrane region" description="Helical" evidence="2">
    <location>
        <begin position="42"/>
        <end position="58"/>
    </location>
</feature>
<feature type="topological domain" description="Mitochondrial intermembrane" evidence="1">
    <location>
        <begin position="59"/>
        <end position="72"/>
    </location>
</feature>
<protein>
    <recommendedName>
        <fullName>Cytochrome b-c1 complex subunit 8-2, mitochondrial</fullName>
    </recommendedName>
    <alternativeName>
        <fullName>Complex III subunit 8-2</fullName>
    </alternativeName>
    <alternativeName>
        <fullName>Complex III subunit VIII</fullName>
    </alternativeName>
    <alternativeName>
        <fullName>Ubiquinol-cytochrome c oxidoreductase subunit 8-2</fullName>
    </alternativeName>
    <alternativeName>
        <fullName>Ubiquinol-cytochrome c reductase complex ubiquinone-binding protein QP-C</fullName>
    </alternativeName>
</protein>
<sequence>MGKQPVKLKAVVYALSPFQQKIMTGLWKDLPEKIHHKVSENWISTILLVAPVVGTYSYAQYFKEQEKLEHRF</sequence>
<comment type="function">
    <text evidence="1">Component of the ubiquinol-cytochrome c oxidoreductase, a multisubunit transmembrane complex that is part of the mitochondrial electron transport chain which drives oxidative phosphorylation. The respiratory chain contains 3 multisubunit complexes succinate dehydrogenase (complex II, CII), ubiquinol-cytochrome c oxidoreductase (cytochrome b-c1 complex, complex III, CIII) and cytochrome c oxidase (complex IV, CIV), that cooperate to transfer electrons derived from NADH and succinate to molecular oxygen, creating an electrochemical gradient over the inner membrane that drives transmembrane transport and the ATP synthase. The cytochrome b-c1 complex catalyzes electron transfer from ubiquinol to cytochrome c, linking this redox reaction to translocation of protons across the mitochondrial inner membrane, with protons being carried across the membrane as hydrogens on the quinol. In the process called Q cycle, 2 protons are consumed from the matrix, 4 protons are released into the intermembrane space and 2 electrons are passed to cytochrome c.</text>
</comment>
<comment type="subunit">
    <text evidence="3 4">Component of the ubiquinol-cytochrome c oxidoreductase (cytochrome b-c1 complex, complex III, CIII), a multisubunit enzyme composed of 10 subunits. The complex is composed of 3 respiratory subunits cytochrome b (MT-CYB), cytochrome c1 (CYC1-1 or CYC1-2) and Rieske protein (UCR1-1 or UCR1-2), 2 core protein subunits MPPalpha1 (or MPPalpha2) and MPPB, and 5 low-molecular weight protein subunits QCR7-1 (or QCR7-2), UCRQ-1 (or UCRQ-2), QCR9, UCRY and probably QCR6-1 (or QCR6-2) (PubMed:18189341). The complex exists as an obligatory dimer and forms supercomplexes (SCs) in the inner mitochondrial membrane with NADH-ubiquinone oxidoreductase (complex I, CI), resulting in different assemblies (supercomplexes SCI(1)III(2) and SCI(2)III(4)) (PubMed:12970493).</text>
</comment>
<comment type="subcellular location">
    <subcellularLocation>
        <location evidence="1">Mitochondrion inner membrane</location>
        <topology evidence="1">Single-pass membrane protein</topology>
    </subcellularLocation>
</comment>
<comment type="similarity">
    <text evidence="5">Belongs to the UQCRQ/QCR8 family.</text>
</comment>